<proteinExistence type="evidence at protein level"/>
<dbReference type="SMR" id="P0DKY9"/>
<dbReference type="ConoServer" id="5842">
    <property type="toxin name" value="conantokin-Rl1"/>
</dbReference>
<dbReference type="GO" id="GO:0005576">
    <property type="term" value="C:extracellular region"/>
    <property type="evidence" value="ECO:0007669"/>
    <property type="project" value="UniProtKB-SubCell"/>
</dbReference>
<dbReference type="GO" id="GO:0035792">
    <property type="term" value="C:host cell postsynaptic membrane"/>
    <property type="evidence" value="ECO:0007669"/>
    <property type="project" value="UniProtKB-KW"/>
</dbReference>
<dbReference type="GO" id="GO:0099106">
    <property type="term" value="F:ion channel regulator activity"/>
    <property type="evidence" value="ECO:0007669"/>
    <property type="project" value="UniProtKB-KW"/>
</dbReference>
<dbReference type="GO" id="GO:0090729">
    <property type="term" value="F:toxin activity"/>
    <property type="evidence" value="ECO:0007669"/>
    <property type="project" value="UniProtKB-KW"/>
</dbReference>
<sequence length="103" mass="11759">MQLYTYLYLLVPLVTFHLILGTGTLDHGGALTERRSTDATALKPEPVLQKSAARSTDDNGKDRLTQMKRILKKRGNNPRADEEYLKFIEEQRKQGKLDPTKFP</sequence>
<accession>P0DKY9</accession>
<feature type="signal peptide" evidence="3">
    <location>
        <begin position="1"/>
        <end position="21"/>
    </location>
</feature>
<feature type="propeptide" id="PRO_0000421892" evidence="8">
    <location>
        <begin position="22"/>
        <end position="79"/>
    </location>
</feature>
<feature type="peptide" id="PRO_0000421893" description="Conantokin R1-A" evidence="8">
    <location>
        <begin position="80"/>
        <end position="103"/>
    </location>
</feature>
<feature type="region of interest" description="Disordered" evidence="4">
    <location>
        <begin position="34"/>
        <end position="83"/>
    </location>
</feature>
<feature type="compositionally biased region" description="Basic and acidic residues" evidence="4">
    <location>
        <begin position="55"/>
        <end position="65"/>
    </location>
</feature>
<feature type="modified residue" description="4-carboxyglutamate" evidence="1 8">
    <location>
        <position position="82"/>
    </location>
</feature>
<feature type="modified residue" description="4-carboxyglutamate" evidence="1 8">
    <location>
        <position position="83"/>
    </location>
</feature>
<feature type="modified residue" description="4-carboxyglutamate" evidence="8">
    <location>
        <position position="89"/>
    </location>
</feature>
<protein>
    <recommendedName>
        <fullName evidence="6">Conantokin R1-A</fullName>
        <shortName evidence="7">Con R1-A</shortName>
        <shortName evidence="6">ConRl-A</shortName>
    </recommendedName>
</protein>
<comment type="function">
    <text evidence="5">Conantokins inhibit N-methyl-D-aspartate (NMDA) receptors. This toxin has the highest potency for the NR2B/GRIN2B subunit (IC(50)=0.11 uM), followed by NR2D/GRIN2D (IC(50)=0.48 uM), NR2A/GRIN2A (IC(50)=2.1 uM), and NR2C/GRIN2C (IC(50)=6.1 uM) subunits when tested on rat receptors.</text>
</comment>
<comment type="cofactor">
    <cofactor evidence="2">
        <name>Ca(2+)</name>
        <dbReference type="ChEBI" id="CHEBI:29108"/>
    </cofactor>
    <cofactor evidence="2">
        <name>Mg(2+)</name>
        <dbReference type="ChEBI" id="CHEBI:18420"/>
    </cofactor>
    <text evidence="2">Divalent cations stabilize the toxin the in alpha-helix conformation.</text>
</comment>
<comment type="subcellular location">
    <subcellularLocation>
        <location evidence="8">Secreted</location>
    </subcellularLocation>
</comment>
<comment type="tissue specificity">
    <text evidence="8">Expressed by the venom duct.</text>
</comment>
<comment type="miscellaneous">
    <text evidence="7">The mature peptide does not contain cysteine residue.</text>
</comment>
<comment type="miscellaneous">
    <text evidence="8">The synthetic peptide exists as two interconvertible conformers.</text>
</comment>
<comment type="similarity">
    <text evidence="7">Belongs to the conotoxin B superfamily.</text>
</comment>
<name>CKR1A_CONRO</name>
<organism>
    <name type="scientific">Conus rolani</name>
    <name type="common">Cone snail</name>
    <dbReference type="NCBI Taxonomy" id="745791"/>
    <lineage>
        <taxon>Eukaryota</taxon>
        <taxon>Metazoa</taxon>
        <taxon>Spiralia</taxon>
        <taxon>Lophotrochozoa</taxon>
        <taxon>Mollusca</taxon>
        <taxon>Gastropoda</taxon>
        <taxon>Caenogastropoda</taxon>
        <taxon>Neogastropoda</taxon>
        <taxon>Conoidea</taxon>
        <taxon>Conidae</taxon>
        <taxon>Conus</taxon>
        <taxon>Asprella</taxon>
    </lineage>
</organism>
<keyword id="KW-0301">Gamma-carboxyglutamic acid</keyword>
<keyword id="KW-0872">Ion channel impairing toxin</keyword>
<keyword id="KW-1028">Ionotropic glutamate receptor inhibitor</keyword>
<keyword id="KW-0528">Neurotoxin</keyword>
<keyword id="KW-0629">Postsynaptic neurotoxin</keyword>
<keyword id="KW-0964">Secreted</keyword>
<keyword id="KW-0732">Signal</keyword>
<keyword id="KW-0800">Toxin</keyword>
<evidence type="ECO:0000250" key="1">
    <source>
        <dbReference type="UniProtKB" id="P07231"/>
    </source>
</evidence>
<evidence type="ECO:0000250" key="2">
    <source>
        <dbReference type="UniProtKB" id="P58806"/>
    </source>
</evidence>
<evidence type="ECO:0000255" key="3"/>
<evidence type="ECO:0000256" key="4">
    <source>
        <dbReference type="SAM" id="MobiDB-lite"/>
    </source>
</evidence>
<evidence type="ECO:0000269" key="5">
    <source>
    </source>
</evidence>
<evidence type="ECO:0000303" key="6">
    <source>
    </source>
</evidence>
<evidence type="ECO:0000305" key="7"/>
<evidence type="ECO:0000305" key="8">
    <source>
    </source>
</evidence>
<reference key="1">
    <citation type="journal article" date="2010" name="J. Pept. Sci.">
        <title>Characterization of conantokin Rl-A: molecular phylogeny as structure/function study.</title>
        <authorList>
            <person name="Gowd K.H."/>
            <person name="Watkins M."/>
            <person name="Twede V.D."/>
            <person name="Bulaj G.W."/>
            <person name="Olivera B.M."/>
        </authorList>
    </citation>
    <scope>NUCLEOTIDE SEQUENCE [GENOMIC DNA]</scope>
    <scope>SYNTHESIS OF 80-103</scope>
    <scope>FUNCTION</scope>
    <scope>CIRCULAR DICHROISM ANALYSIS</scope>
    <scope>GAMMA-CARBOXYGLUTAMATION AT GLU-82; GLU-83 AND GLU-89</scope>
</reference>